<sequence>MTGKKRSASSSRWLQEHFSDKYVQQAQKKGLRSRAWFKLDEIQQSDKLFKPGMTVVDLGAAPGGWSQYVVTQIGGKGRIIACDLLPMDPIVGVDFLQGDFRDELVMKALLERVGDSKVQVVMSDMAPNMSGTPAVDIPRAMYLVELALEMCRDVLAPGGSFVVKVFQGEGFDEYLREIRSLFTKVKVRKPDSSRARSREVYIVATGRKP</sequence>
<evidence type="ECO:0000255" key="1">
    <source>
        <dbReference type="HAMAP-Rule" id="MF_01547"/>
    </source>
</evidence>
<name>RLME_ECOL6</name>
<feature type="chain" id="PRO_0000155499" description="Ribosomal RNA large subunit methyltransferase E">
    <location>
        <begin position="1"/>
        <end position="209"/>
    </location>
</feature>
<feature type="active site" description="Proton acceptor" evidence="1">
    <location>
        <position position="164"/>
    </location>
</feature>
<feature type="binding site" evidence="1">
    <location>
        <position position="63"/>
    </location>
    <ligand>
        <name>S-adenosyl-L-methionine</name>
        <dbReference type="ChEBI" id="CHEBI:59789"/>
    </ligand>
</feature>
<feature type="binding site" evidence="1">
    <location>
        <position position="65"/>
    </location>
    <ligand>
        <name>S-adenosyl-L-methionine</name>
        <dbReference type="ChEBI" id="CHEBI:59789"/>
    </ligand>
</feature>
<feature type="binding site" evidence="1">
    <location>
        <position position="83"/>
    </location>
    <ligand>
        <name>S-adenosyl-L-methionine</name>
        <dbReference type="ChEBI" id="CHEBI:59789"/>
    </ligand>
</feature>
<feature type="binding site" evidence="1">
    <location>
        <position position="99"/>
    </location>
    <ligand>
        <name>S-adenosyl-L-methionine</name>
        <dbReference type="ChEBI" id="CHEBI:59789"/>
    </ligand>
</feature>
<feature type="binding site" evidence="1">
    <location>
        <position position="124"/>
    </location>
    <ligand>
        <name>S-adenosyl-L-methionine</name>
        <dbReference type="ChEBI" id="CHEBI:59789"/>
    </ligand>
</feature>
<accession>P0C0R9</accession>
<accession>P28692</accession>
<keyword id="KW-0963">Cytoplasm</keyword>
<keyword id="KW-0489">Methyltransferase</keyword>
<keyword id="KW-1185">Reference proteome</keyword>
<keyword id="KW-0698">rRNA processing</keyword>
<keyword id="KW-0949">S-adenosyl-L-methionine</keyword>
<keyword id="KW-0808">Transferase</keyword>
<organism>
    <name type="scientific">Escherichia coli O6:H1 (strain CFT073 / ATCC 700928 / UPEC)</name>
    <dbReference type="NCBI Taxonomy" id="199310"/>
    <lineage>
        <taxon>Bacteria</taxon>
        <taxon>Pseudomonadati</taxon>
        <taxon>Pseudomonadota</taxon>
        <taxon>Gammaproteobacteria</taxon>
        <taxon>Enterobacterales</taxon>
        <taxon>Enterobacteriaceae</taxon>
        <taxon>Escherichia</taxon>
    </lineage>
</organism>
<protein>
    <recommendedName>
        <fullName evidence="1">Ribosomal RNA large subunit methyltransferase E</fullName>
        <ecNumber evidence="1">2.1.1.166</ecNumber>
    </recommendedName>
    <alternativeName>
        <fullName evidence="1">23S rRNA Um2552 methyltransferase</fullName>
    </alternativeName>
    <alternativeName>
        <fullName evidence="1">rRNA (uridine-2'-O-)-methyltransferase</fullName>
    </alternativeName>
</protein>
<gene>
    <name evidence="1" type="primary">rlmE</name>
    <name evidence="1" type="synonym">ftsJ</name>
    <name evidence="1" type="synonym">rrmJ</name>
    <name type="ordered locus">c3936</name>
</gene>
<proteinExistence type="inferred from homology"/>
<dbReference type="EC" id="2.1.1.166" evidence="1"/>
<dbReference type="EMBL" id="AE014075">
    <property type="protein sequence ID" value="AAN82376.1"/>
    <property type="molecule type" value="Genomic_DNA"/>
</dbReference>
<dbReference type="RefSeq" id="WP_000145975.1">
    <property type="nucleotide sequence ID" value="NZ_CP051263.1"/>
</dbReference>
<dbReference type="SMR" id="P0C0R9"/>
<dbReference type="STRING" id="199310.c3936"/>
<dbReference type="GeneID" id="93778802"/>
<dbReference type="KEGG" id="ecc:c3936"/>
<dbReference type="eggNOG" id="COG0293">
    <property type="taxonomic scope" value="Bacteria"/>
</dbReference>
<dbReference type="HOGENOM" id="CLU_009422_4_0_6"/>
<dbReference type="BioCyc" id="ECOL199310:C3936-MONOMER"/>
<dbReference type="Proteomes" id="UP000001410">
    <property type="component" value="Chromosome"/>
</dbReference>
<dbReference type="GO" id="GO:0005737">
    <property type="term" value="C:cytoplasm"/>
    <property type="evidence" value="ECO:0007669"/>
    <property type="project" value="UniProtKB-SubCell"/>
</dbReference>
<dbReference type="GO" id="GO:0008650">
    <property type="term" value="F:rRNA (uridine-2'-O-)-methyltransferase activity"/>
    <property type="evidence" value="ECO:0007669"/>
    <property type="project" value="UniProtKB-UniRule"/>
</dbReference>
<dbReference type="CDD" id="cd02440">
    <property type="entry name" value="AdoMet_MTases"/>
    <property type="match status" value="1"/>
</dbReference>
<dbReference type="FunFam" id="3.40.50.150:FF:000005">
    <property type="entry name" value="Ribosomal RNA large subunit methyltransferase E"/>
    <property type="match status" value="1"/>
</dbReference>
<dbReference type="Gene3D" id="3.40.50.150">
    <property type="entry name" value="Vaccinia Virus protein VP39"/>
    <property type="match status" value="1"/>
</dbReference>
<dbReference type="HAMAP" id="MF_01547">
    <property type="entry name" value="RNA_methyltr_E"/>
    <property type="match status" value="1"/>
</dbReference>
<dbReference type="InterPro" id="IPR050082">
    <property type="entry name" value="RNA_methyltr_RlmE"/>
</dbReference>
<dbReference type="InterPro" id="IPR002877">
    <property type="entry name" value="RNA_MeTrfase_FtsJ_dom"/>
</dbReference>
<dbReference type="InterPro" id="IPR015507">
    <property type="entry name" value="rRNA-MeTfrase_E"/>
</dbReference>
<dbReference type="InterPro" id="IPR004512">
    <property type="entry name" value="rRNA_MeTrfase_gammaproteobac"/>
</dbReference>
<dbReference type="InterPro" id="IPR029063">
    <property type="entry name" value="SAM-dependent_MTases_sf"/>
</dbReference>
<dbReference type="NCBIfam" id="NF008390">
    <property type="entry name" value="PRK11188.1"/>
    <property type="match status" value="1"/>
</dbReference>
<dbReference type="NCBIfam" id="TIGR00438">
    <property type="entry name" value="rrmJ"/>
    <property type="match status" value="1"/>
</dbReference>
<dbReference type="PANTHER" id="PTHR10920">
    <property type="entry name" value="RIBOSOMAL RNA METHYLTRANSFERASE"/>
    <property type="match status" value="1"/>
</dbReference>
<dbReference type="PANTHER" id="PTHR10920:SF18">
    <property type="entry name" value="RRNA METHYLTRANSFERASE 2, MITOCHONDRIAL"/>
    <property type="match status" value="1"/>
</dbReference>
<dbReference type="Pfam" id="PF01728">
    <property type="entry name" value="FtsJ"/>
    <property type="match status" value="1"/>
</dbReference>
<dbReference type="PIRSF" id="PIRSF005461">
    <property type="entry name" value="23S_rRNA_mtase"/>
    <property type="match status" value="1"/>
</dbReference>
<dbReference type="SUPFAM" id="SSF53335">
    <property type="entry name" value="S-adenosyl-L-methionine-dependent methyltransferases"/>
    <property type="match status" value="1"/>
</dbReference>
<comment type="function">
    <text evidence="1">Specifically methylates the uridine in position 2552 of 23S rRNA at the 2'-O position of the ribose in the fully assembled 50S ribosomal subunit.</text>
</comment>
<comment type="catalytic activity">
    <reaction evidence="1">
        <text>uridine(2552) in 23S rRNA + S-adenosyl-L-methionine = 2'-O-methyluridine(2552) in 23S rRNA + S-adenosyl-L-homocysteine + H(+)</text>
        <dbReference type="Rhea" id="RHEA:42720"/>
        <dbReference type="Rhea" id="RHEA-COMP:10202"/>
        <dbReference type="Rhea" id="RHEA-COMP:10203"/>
        <dbReference type="ChEBI" id="CHEBI:15378"/>
        <dbReference type="ChEBI" id="CHEBI:57856"/>
        <dbReference type="ChEBI" id="CHEBI:59789"/>
        <dbReference type="ChEBI" id="CHEBI:65315"/>
        <dbReference type="ChEBI" id="CHEBI:74478"/>
        <dbReference type="EC" id="2.1.1.166"/>
    </reaction>
</comment>
<comment type="subcellular location">
    <subcellularLocation>
        <location evidence="1">Cytoplasm</location>
    </subcellularLocation>
</comment>
<comment type="similarity">
    <text evidence="1">Belongs to the class I-like SAM-binding methyltransferase superfamily. RNA methyltransferase RlmE family.</text>
</comment>
<reference key="1">
    <citation type="journal article" date="2002" name="Proc. Natl. Acad. Sci. U.S.A.">
        <title>Extensive mosaic structure revealed by the complete genome sequence of uropathogenic Escherichia coli.</title>
        <authorList>
            <person name="Welch R.A."/>
            <person name="Burland V."/>
            <person name="Plunkett G. III"/>
            <person name="Redford P."/>
            <person name="Roesch P."/>
            <person name="Rasko D."/>
            <person name="Buckles E.L."/>
            <person name="Liou S.-R."/>
            <person name="Boutin A."/>
            <person name="Hackett J."/>
            <person name="Stroud D."/>
            <person name="Mayhew G.F."/>
            <person name="Rose D.J."/>
            <person name="Zhou S."/>
            <person name="Schwartz D.C."/>
            <person name="Perna N.T."/>
            <person name="Mobley H.L.T."/>
            <person name="Donnenberg M.S."/>
            <person name="Blattner F.R."/>
        </authorList>
    </citation>
    <scope>NUCLEOTIDE SEQUENCE [LARGE SCALE GENOMIC DNA]</scope>
    <source>
        <strain>CFT073 / ATCC 700928 / UPEC</strain>
    </source>
</reference>